<gene>
    <name evidence="1" type="primary">rplC</name>
    <name type="ordered locus">Ldb0396</name>
</gene>
<organism>
    <name type="scientific">Lactobacillus delbrueckii subsp. bulgaricus (strain ATCC 11842 / DSM 20081 / BCRC 10696 / JCM 1002 / NBRC 13953 / NCIMB 11778 / NCTC 12712 / WDCM 00102 / Lb 14)</name>
    <dbReference type="NCBI Taxonomy" id="390333"/>
    <lineage>
        <taxon>Bacteria</taxon>
        <taxon>Bacillati</taxon>
        <taxon>Bacillota</taxon>
        <taxon>Bacilli</taxon>
        <taxon>Lactobacillales</taxon>
        <taxon>Lactobacillaceae</taxon>
        <taxon>Lactobacillus</taxon>
    </lineage>
</organism>
<accession>Q1GBL8</accession>
<evidence type="ECO:0000255" key="1">
    <source>
        <dbReference type="HAMAP-Rule" id="MF_01325"/>
    </source>
</evidence>
<evidence type="ECO:0000256" key="2">
    <source>
        <dbReference type="SAM" id="MobiDB-lite"/>
    </source>
</evidence>
<evidence type="ECO:0000305" key="3"/>
<dbReference type="EMBL" id="CR954253">
    <property type="protein sequence ID" value="CAI97231.1"/>
    <property type="molecule type" value="Genomic_DNA"/>
</dbReference>
<dbReference type="RefSeq" id="WP_002878214.1">
    <property type="nucleotide sequence ID" value="NZ_JQAV01000001.1"/>
</dbReference>
<dbReference type="SMR" id="Q1GBL8"/>
<dbReference type="STRING" id="390333.Ldb0396"/>
<dbReference type="GeneID" id="69668426"/>
<dbReference type="KEGG" id="ldb:Ldb0396"/>
<dbReference type="PATRIC" id="fig|390333.13.peg.394"/>
<dbReference type="eggNOG" id="COG0087">
    <property type="taxonomic scope" value="Bacteria"/>
</dbReference>
<dbReference type="HOGENOM" id="CLU_044142_4_1_9"/>
<dbReference type="BioCyc" id="LDEL390333:LDB_RS01675-MONOMER"/>
<dbReference type="Proteomes" id="UP000001259">
    <property type="component" value="Chromosome"/>
</dbReference>
<dbReference type="GO" id="GO:0022625">
    <property type="term" value="C:cytosolic large ribosomal subunit"/>
    <property type="evidence" value="ECO:0007669"/>
    <property type="project" value="TreeGrafter"/>
</dbReference>
<dbReference type="GO" id="GO:0019843">
    <property type="term" value="F:rRNA binding"/>
    <property type="evidence" value="ECO:0007669"/>
    <property type="project" value="UniProtKB-UniRule"/>
</dbReference>
<dbReference type="GO" id="GO:0003735">
    <property type="term" value="F:structural constituent of ribosome"/>
    <property type="evidence" value="ECO:0007669"/>
    <property type="project" value="InterPro"/>
</dbReference>
<dbReference type="GO" id="GO:0006412">
    <property type="term" value="P:translation"/>
    <property type="evidence" value="ECO:0007669"/>
    <property type="project" value="UniProtKB-UniRule"/>
</dbReference>
<dbReference type="FunFam" id="2.40.30.10:FF:000004">
    <property type="entry name" value="50S ribosomal protein L3"/>
    <property type="match status" value="1"/>
</dbReference>
<dbReference type="FunFam" id="3.30.160.810:FF:000002">
    <property type="entry name" value="50S ribosomal protein L3"/>
    <property type="match status" value="1"/>
</dbReference>
<dbReference type="Gene3D" id="3.30.160.810">
    <property type="match status" value="1"/>
</dbReference>
<dbReference type="Gene3D" id="2.40.30.10">
    <property type="entry name" value="Translation factors"/>
    <property type="match status" value="1"/>
</dbReference>
<dbReference type="HAMAP" id="MF_01325_B">
    <property type="entry name" value="Ribosomal_uL3_B"/>
    <property type="match status" value="1"/>
</dbReference>
<dbReference type="InterPro" id="IPR000597">
    <property type="entry name" value="Ribosomal_uL3"/>
</dbReference>
<dbReference type="InterPro" id="IPR019927">
    <property type="entry name" value="Ribosomal_uL3_bac/org-type"/>
</dbReference>
<dbReference type="InterPro" id="IPR019926">
    <property type="entry name" value="Ribosomal_uL3_CS"/>
</dbReference>
<dbReference type="InterPro" id="IPR009000">
    <property type="entry name" value="Transl_B-barrel_sf"/>
</dbReference>
<dbReference type="NCBIfam" id="TIGR03625">
    <property type="entry name" value="L3_bact"/>
    <property type="match status" value="1"/>
</dbReference>
<dbReference type="PANTHER" id="PTHR11229">
    <property type="entry name" value="50S RIBOSOMAL PROTEIN L3"/>
    <property type="match status" value="1"/>
</dbReference>
<dbReference type="PANTHER" id="PTHR11229:SF16">
    <property type="entry name" value="LARGE RIBOSOMAL SUBUNIT PROTEIN UL3C"/>
    <property type="match status" value="1"/>
</dbReference>
<dbReference type="Pfam" id="PF00297">
    <property type="entry name" value="Ribosomal_L3"/>
    <property type="match status" value="1"/>
</dbReference>
<dbReference type="SUPFAM" id="SSF50447">
    <property type="entry name" value="Translation proteins"/>
    <property type="match status" value="1"/>
</dbReference>
<dbReference type="PROSITE" id="PS00474">
    <property type="entry name" value="RIBOSOMAL_L3"/>
    <property type="match status" value="1"/>
</dbReference>
<keyword id="KW-1185">Reference proteome</keyword>
<keyword id="KW-0687">Ribonucleoprotein</keyword>
<keyword id="KW-0689">Ribosomal protein</keyword>
<keyword id="KW-0694">RNA-binding</keyword>
<keyword id="KW-0699">rRNA-binding</keyword>
<protein>
    <recommendedName>
        <fullName evidence="1">Large ribosomal subunit protein uL3</fullName>
    </recommendedName>
    <alternativeName>
        <fullName evidence="3">50S ribosomal protein L3</fullName>
    </alternativeName>
</protein>
<sequence length="209" mass="22765">MTKGILGRKVGMTQIFTKDGVLVPVTVIEATPNVVMQVKTVENDGYEAVQLGYQDKREVLSNKPEKGHADKAKTSPKRFIRELRGVELSDYEVGSEVTVETFKEGDVVNVTGTSRGHGYQGNIKRHHQSRGPETHGSRYHRIPGSMGSIINRVPKGKKLPGHMGVKTVTIENLVVEKVVADKNVLMIKGNVPGAKNSLIVVKSSAKASK</sequence>
<reference key="1">
    <citation type="journal article" date="2006" name="Proc. Natl. Acad. Sci. U.S.A.">
        <title>The complete genome sequence of Lactobacillus bulgaricus reveals extensive and ongoing reductive evolution.</title>
        <authorList>
            <person name="van de Guchte M."/>
            <person name="Penaud S."/>
            <person name="Grimaldi C."/>
            <person name="Barbe V."/>
            <person name="Bryson K."/>
            <person name="Nicolas P."/>
            <person name="Robert C."/>
            <person name="Oztas S."/>
            <person name="Mangenot S."/>
            <person name="Couloux A."/>
            <person name="Loux V."/>
            <person name="Dervyn R."/>
            <person name="Bossy R."/>
            <person name="Bolotin A."/>
            <person name="Batto J.-M."/>
            <person name="Walunas T."/>
            <person name="Gibrat J.-F."/>
            <person name="Bessieres P."/>
            <person name="Weissenbach J."/>
            <person name="Ehrlich S.D."/>
            <person name="Maguin E."/>
        </authorList>
    </citation>
    <scope>NUCLEOTIDE SEQUENCE [LARGE SCALE GENOMIC DNA]</scope>
    <source>
        <strain>ATCC 11842 / DSM 20081 / BCRC 10696 / JCM 1002 / NBRC 13953 / NCIMB 11778 / NCTC 12712 / WDCM 00102 / Lb 14</strain>
    </source>
</reference>
<comment type="function">
    <text evidence="1">One of the primary rRNA binding proteins, it binds directly near the 3'-end of the 23S rRNA, where it nucleates assembly of the 50S subunit.</text>
</comment>
<comment type="subunit">
    <text evidence="1">Part of the 50S ribosomal subunit. Forms a cluster with proteins L14 and L19.</text>
</comment>
<comment type="similarity">
    <text evidence="1">Belongs to the universal ribosomal protein uL3 family.</text>
</comment>
<name>RL3_LACDA</name>
<feature type="chain" id="PRO_1000052064" description="Large ribosomal subunit protein uL3">
    <location>
        <begin position="1"/>
        <end position="209"/>
    </location>
</feature>
<feature type="region of interest" description="Disordered" evidence="2">
    <location>
        <begin position="113"/>
        <end position="155"/>
    </location>
</feature>
<proteinExistence type="inferred from homology"/>